<protein>
    <recommendedName>
        <fullName>Protein SlyX</fullName>
    </recommendedName>
</protein>
<evidence type="ECO:0000256" key="1">
    <source>
        <dbReference type="SAM" id="MobiDB-lite"/>
    </source>
</evidence>
<evidence type="ECO:0000305" key="2"/>
<proteinExistence type="inferred from homology"/>
<organism>
    <name type="scientific">Escherichia coli O6:H1 (strain CFT073 / ATCC 700928 / UPEC)</name>
    <dbReference type="NCBI Taxonomy" id="199310"/>
    <lineage>
        <taxon>Bacteria</taxon>
        <taxon>Pseudomonadati</taxon>
        <taxon>Pseudomonadota</taxon>
        <taxon>Gammaproteobacteria</taxon>
        <taxon>Enterobacterales</taxon>
        <taxon>Enterobacteriaceae</taxon>
        <taxon>Escherichia</taxon>
    </lineage>
</organism>
<reference key="1">
    <citation type="journal article" date="2002" name="Proc. Natl. Acad. Sci. U.S.A.">
        <title>Extensive mosaic structure revealed by the complete genome sequence of uropathogenic Escherichia coli.</title>
        <authorList>
            <person name="Welch R.A."/>
            <person name="Burland V."/>
            <person name="Plunkett G. III"/>
            <person name="Redford P."/>
            <person name="Roesch P."/>
            <person name="Rasko D."/>
            <person name="Buckles E.L."/>
            <person name="Liou S.-R."/>
            <person name="Boutin A."/>
            <person name="Hackett J."/>
            <person name="Stroud D."/>
            <person name="Mayhew G.F."/>
            <person name="Rose D.J."/>
            <person name="Zhou S."/>
            <person name="Schwartz D.C."/>
            <person name="Perna N.T."/>
            <person name="Mobley H.L.T."/>
            <person name="Donnenberg M.S."/>
            <person name="Blattner F.R."/>
        </authorList>
    </citation>
    <scope>NUCLEOTIDE SEQUENCE [LARGE SCALE GENOMIC DNA]</scope>
    <source>
        <strain>CFT073 / ATCC 700928 / UPEC</strain>
    </source>
</reference>
<sequence length="72" mass="8214">MQDLSLEARLAELESRLAFQEITIEELNVTVTAHEMEMAKLRDHLRLLTEKLKASQPSNIASQAEETPPPHY</sequence>
<feature type="chain" id="PRO_0000209200" description="Protein SlyX">
    <location>
        <begin position="1"/>
        <end position="72"/>
    </location>
</feature>
<feature type="region of interest" description="Disordered" evidence="1">
    <location>
        <begin position="52"/>
        <end position="72"/>
    </location>
</feature>
<feature type="compositionally biased region" description="Polar residues" evidence="1">
    <location>
        <begin position="55"/>
        <end position="65"/>
    </location>
</feature>
<accession>P0A8R5</accession>
<accession>P30857</accession>
<comment type="similarity">
    <text evidence="2">Belongs to the SlyX family.</text>
</comment>
<dbReference type="EMBL" id="AE014075">
    <property type="protein sequence ID" value="AAN82560.1"/>
    <property type="molecule type" value="Genomic_DNA"/>
</dbReference>
<dbReference type="RefSeq" id="WP_001153615.1">
    <property type="nucleotide sequence ID" value="NZ_CP051263.1"/>
</dbReference>
<dbReference type="SMR" id="P0A8R5"/>
<dbReference type="STRING" id="199310.c4122"/>
<dbReference type="KEGG" id="ecc:c4122"/>
<dbReference type="eggNOG" id="COG2900">
    <property type="taxonomic scope" value="Bacteria"/>
</dbReference>
<dbReference type="HOGENOM" id="CLU_180796_4_2_6"/>
<dbReference type="BioCyc" id="ECOL199310:C4122-MONOMER"/>
<dbReference type="Proteomes" id="UP000001410">
    <property type="component" value="Chromosome"/>
</dbReference>
<dbReference type="Gene3D" id="1.20.5.300">
    <property type="match status" value="1"/>
</dbReference>
<dbReference type="HAMAP" id="MF_00715">
    <property type="entry name" value="SlyX"/>
    <property type="match status" value="1"/>
</dbReference>
<dbReference type="InterPro" id="IPR007236">
    <property type="entry name" value="SlyX"/>
</dbReference>
<dbReference type="NCBIfam" id="NF002750">
    <property type="entry name" value="PRK02793.1"/>
    <property type="match status" value="1"/>
</dbReference>
<dbReference type="PANTHER" id="PTHR36508">
    <property type="entry name" value="PROTEIN SLYX"/>
    <property type="match status" value="1"/>
</dbReference>
<dbReference type="PANTHER" id="PTHR36508:SF1">
    <property type="entry name" value="PROTEIN SLYX"/>
    <property type="match status" value="1"/>
</dbReference>
<dbReference type="Pfam" id="PF04102">
    <property type="entry name" value="SlyX"/>
    <property type="match status" value="1"/>
</dbReference>
<gene>
    <name type="primary">slyX</name>
    <name type="ordered locus">c4122</name>
</gene>
<keyword id="KW-1185">Reference proteome</keyword>
<name>SLYX_ECOL6</name>